<feature type="chain" id="PRO_1000124318" description="Ketol-acid reductoisomerase (NADP(+))">
    <location>
        <begin position="1"/>
        <end position="338"/>
    </location>
</feature>
<feature type="domain" description="KARI N-terminal Rossmann" evidence="2">
    <location>
        <begin position="1"/>
        <end position="181"/>
    </location>
</feature>
<feature type="domain" description="KARI C-terminal knotted" evidence="3">
    <location>
        <begin position="182"/>
        <end position="327"/>
    </location>
</feature>
<feature type="active site" evidence="1">
    <location>
        <position position="107"/>
    </location>
</feature>
<feature type="binding site" evidence="1">
    <location>
        <begin position="24"/>
        <end position="27"/>
    </location>
    <ligand>
        <name>NADP(+)</name>
        <dbReference type="ChEBI" id="CHEBI:58349"/>
    </ligand>
</feature>
<feature type="binding site" evidence="1">
    <location>
        <position position="47"/>
    </location>
    <ligand>
        <name>NADP(+)</name>
        <dbReference type="ChEBI" id="CHEBI:58349"/>
    </ligand>
</feature>
<feature type="binding site" evidence="1">
    <location>
        <position position="52"/>
    </location>
    <ligand>
        <name>NADP(+)</name>
        <dbReference type="ChEBI" id="CHEBI:58349"/>
    </ligand>
</feature>
<feature type="binding site" evidence="1">
    <location>
        <position position="133"/>
    </location>
    <ligand>
        <name>NADP(+)</name>
        <dbReference type="ChEBI" id="CHEBI:58349"/>
    </ligand>
</feature>
<feature type="binding site" evidence="1">
    <location>
        <position position="190"/>
    </location>
    <ligand>
        <name>Mg(2+)</name>
        <dbReference type="ChEBI" id="CHEBI:18420"/>
        <label>1</label>
    </ligand>
</feature>
<feature type="binding site" evidence="1">
    <location>
        <position position="190"/>
    </location>
    <ligand>
        <name>Mg(2+)</name>
        <dbReference type="ChEBI" id="CHEBI:18420"/>
        <label>2</label>
    </ligand>
</feature>
<feature type="binding site" evidence="1">
    <location>
        <position position="194"/>
    </location>
    <ligand>
        <name>Mg(2+)</name>
        <dbReference type="ChEBI" id="CHEBI:18420"/>
        <label>1</label>
    </ligand>
</feature>
<feature type="binding site" evidence="1">
    <location>
        <position position="226"/>
    </location>
    <ligand>
        <name>Mg(2+)</name>
        <dbReference type="ChEBI" id="CHEBI:18420"/>
        <label>2</label>
    </ligand>
</feature>
<feature type="binding site" evidence="1">
    <location>
        <position position="230"/>
    </location>
    <ligand>
        <name>Mg(2+)</name>
        <dbReference type="ChEBI" id="CHEBI:18420"/>
        <label>2</label>
    </ligand>
</feature>
<feature type="binding site" evidence="1">
    <location>
        <position position="251"/>
    </location>
    <ligand>
        <name>substrate</name>
    </ligand>
</feature>
<organism>
    <name type="scientific">Polynucleobacter necessarius subsp. necessarius (strain STIR1)</name>
    <dbReference type="NCBI Taxonomy" id="452638"/>
    <lineage>
        <taxon>Bacteria</taxon>
        <taxon>Pseudomonadati</taxon>
        <taxon>Pseudomonadota</taxon>
        <taxon>Betaproteobacteria</taxon>
        <taxon>Burkholderiales</taxon>
        <taxon>Burkholderiaceae</taxon>
        <taxon>Polynucleobacter</taxon>
    </lineage>
</organism>
<dbReference type="EC" id="1.1.1.86" evidence="1"/>
<dbReference type="EMBL" id="CP001010">
    <property type="protein sequence ID" value="ACB44017.1"/>
    <property type="molecule type" value="Genomic_DNA"/>
</dbReference>
<dbReference type="SMR" id="B1XUJ0"/>
<dbReference type="STRING" id="452638.Pnec_0812"/>
<dbReference type="KEGG" id="pne:Pnec_0812"/>
<dbReference type="eggNOG" id="COG0059">
    <property type="taxonomic scope" value="Bacteria"/>
</dbReference>
<dbReference type="HOGENOM" id="CLU_033821_0_1_4"/>
<dbReference type="OrthoDB" id="9804088at2"/>
<dbReference type="UniPathway" id="UPA00047">
    <property type="reaction ID" value="UER00056"/>
</dbReference>
<dbReference type="UniPathway" id="UPA00049">
    <property type="reaction ID" value="UER00060"/>
</dbReference>
<dbReference type="GO" id="GO:0005829">
    <property type="term" value="C:cytosol"/>
    <property type="evidence" value="ECO:0007669"/>
    <property type="project" value="TreeGrafter"/>
</dbReference>
<dbReference type="GO" id="GO:0004455">
    <property type="term" value="F:ketol-acid reductoisomerase activity"/>
    <property type="evidence" value="ECO:0007669"/>
    <property type="project" value="UniProtKB-UniRule"/>
</dbReference>
<dbReference type="GO" id="GO:0000287">
    <property type="term" value="F:magnesium ion binding"/>
    <property type="evidence" value="ECO:0007669"/>
    <property type="project" value="UniProtKB-UniRule"/>
</dbReference>
<dbReference type="GO" id="GO:0050661">
    <property type="term" value="F:NADP binding"/>
    <property type="evidence" value="ECO:0007669"/>
    <property type="project" value="InterPro"/>
</dbReference>
<dbReference type="GO" id="GO:0009097">
    <property type="term" value="P:isoleucine biosynthetic process"/>
    <property type="evidence" value="ECO:0007669"/>
    <property type="project" value="UniProtKB-UniRule"/>
</dbReference>
<dbReference type="GO" id="GO:0009099">
    <property type="term" value="P:L-valine biosynthetic process"/>
    <property type="evidence" value="ECO:0007669"/>
    <property type="project" value="UniProtKB-UniRule"/>
</dbReference>
<dbReference type="FunFam" id="3.40.50.720:FF:000023">
    <property type="entry name" value="Ketol-acid reductoisomerase (NADP(+))"/>
    <property type="match status" value="1"/>
</dbReference>
<dbReference type="Gene3D" id="6.10.240.10">
    <property type="match status" value="1"/>
</dbReference>
<dbReference type="Gene3D" id="3.40.50.720">
    <property type="entry name" value="NAD(P)-binding Rossmann-like Domain"/>
    <property type="match status" value="1"/>
</dbReference>
<dbReference type="HAMAP" id="MF_00435">
    <property type="entry name" value="IlvC"/>
    <property type="match status" value="1"/>
</dbReference>
<dbReference type="InterPro" id="IPR008927">
    <property type="entry name" value="6-PGluconate_DH-like_C_sf"/>
</dbReference>
<dbReference type="InterPro" id="IPR013023">
    <property type="entry name" value="KARI"/>
</dbReference>
<dbReference type="InterPro" id="IPR000506">
    <property type="entry name" value="KARI_C"/>
</dbReference>
<dbReference type="InterPro" id="IPR013116">
    <property type="entry name" value="KARI_N"/>
</dbReference>
<dbReference type="InterPro" id="IPR014359">
    <property type="entry name" value="KARI_prok"/>
</dbReference>
<dbReference type="InterPro" id="IPR036291">
    <property type="entry name" value="NAD(P)-bd_dom_sf"/>
</dbReference>
<dbReference type="NCBIfam" id="TIGR00465">
    <property type="entry name" value="ilvC"/>
    <property type="match status" value="1"/>
</dbReference>
<dbReference type="NCBIfam" id="NF004017">
    <property type="entry name" value="PRK05479.1"/>
    <property type="match status" value="1"/>
</dbReference>
<dbReference type="NCBIfam" id="NF009940">
    <property type="entry name" value="PRK13403.1"/>
    <property type="match status" value="1"/>
</dbReference>
<dbReference type="PANTHER" id="PTHR21371">
    <property type="entry name" value="KETOL-ACID REDUCTOISOMERASE, MITOCHONDRIAL"/>
    <property type="match status" value="1"/>
</dbReference>
<dbReference type="PANTHER" id="PTHR21371:SF1">
    <property type="entry name" value="KETOL-ACID REDUCTOISOMERASE, MITOCHONDRIAL"/>
    <property type="match status" value="1"/>
</dbReference>
<dbReference type="Pfam" id="PF01450">
    <property type="entry name" value="KARI_C"/>
    <property type="match status" value="1"/>
</dbReference>
<dbReference type="Pfam" id="PF07991">
    <property type="entry name" value="KARI_N"/>
    <property type="match status" value="1"/>
</dbReference>
<dbReference type="PIRSF" id="PIRSF000116">
    <property type="entry name" value="IlvC_gammaproteo"/>
    <property type="match status" value="1"/>
</dbReference>
<dbReference type="SUPFAM" id="SSF48179">
    <property type="entry name" value="6-phosphogluconate dehydrogenase C-terminal domain-like"/>
    <property type="match status" value="1"/>
</dbReference>
<dbReference type="SUPFAM" id="SSF51735">
    <property type="entry name" value="NAD(P)-binding Rossmann-fold domains"/>
    <property type="match status" value="1"/>
</dbReference>
<dbReference type="PROSITE" id="PS51851">
    <property type="entry name" value="KARI_C"/>
    <property type="match status" value="1"/>
</dbReference>
<dbReference type="PROSITE" id="PS51850">
    <property type="entry name" value="KARI_N"/>
    <property type="match status" value="1"/>
</dbReference>
<gene>
    <name evidence="1" type="primary">ilvC</name>
    <name type="ordered locus">Pnec_0812</name>
</gene>
<sequence>MKVFYDKDADLSLIKGKKVTIIGYGSQGHAHALNLKDSGVNVTVGLRKDGASWSKAANAGLTVKEVDEAVKDADVVMMLLPDEQIADVYNKEVHGNIKQGAALAFAHGFNVHYGQVQSRADLDVIMIAPKAPGHKVRGTYAQGGGVPHLIAVYQDKSGSARDVALSYATANGGGRAGIIETNFREETETDLFGEQAVLCGGAVELIKAGFETLVEAGYAPEMAYFECLHELKLIVDLIYEGGIANMNYSISNNAEYGEYVTGPRVVTEDTKNAMRQCLKDIQTGEYAKSFILENKAGAPTLISRRRLNAEHDIEVVGAKLRAMMPWIAKNKLVDETKN</sequence>
<protein>
    <recommendedName>
        <fullName evidence="1">Ketol-acid reductoisomerase (NADP(+))</fullName>
        <shortName evidence="1">KARI</shortName>
        <ecNumber evidence="1">1.1.1.86</ecNumber>
    </recommendedName>
    <alternativeName>
        <fullName evidence="1">Acetohydroxy-acid isomeroreductase</fullName>
        <shortName evidence="1">AHIR</shortName>
    </alternativeName>
    <alternativeName>
        <fullName evidence="1">Alpha-keto-beta-hydroxylacyl reductoisomerase</fullName>
    </alternativeName>
    <alternativeName>
        <fullName evidence="1">Ketol-acid reductoisomerase type 1</fullName>
    </alternativeName>
    <alternativeName>
        <fullName evidence="1">Ketol-acid reductoisomerase type I</fullName>
    </alternativeName>
</protein>
<keyword id="KW-0028">Amino-acid biosynthesis</keyword>
<keyword id="KW-0100">Branched-chain amino acid biosynthesis</keyword>
<keyword id="KW-0460">Magnesium</keyword>
<keyword id="KW-0479">Metal-binding</keyword>
<keyword id="KW-0521">NADP</keyword>
<keyword id="KW-0560">Oxidoreductase</keyword>
<reference key="1">
    <citation type="journal article" date="2013" name="Proc. Natl. Acad. Sci. U.S.A.">
        <title>Polynucleobacter necessarius, a model for genome reduction in both free-living and symbiotic bacteria.</title>
        <authorList>
            <person name="Boscaro V."/>
            <person name="Felletti M."/>
            <person name="Vannini C."/>
            <person name="Ackerman M.S."/>
            <person name="Chain P.S."/>
            <person name="Malfatti S."/>
            <person name="Vergez L.M."/>
            <person name="Shin M."/>
            <person name="Doak T.G."/>
            <person name="Lynch M."/>
            <person name="Petroni G."/>
        </authorList>
    </citation>
    <scope>NUCLEOTIDE SEQUENCE [LARGE SCALE GENOMIC DNA]</scope>
    <source>
        <strain>STIR1</strain>
    </source>
</reference>
<name>ILVC_POLNS</name>
<comment type="function">
    <text evidence="1">Involved in the biosynthesis of branched-chain amino acids (BCAA). Catalyzes an alkyl-migration followed by a ketol-acid reduction of (S)-2-acetolactate (S2AL) to yield (R)-2,3-dihydroxy-isovalerate. In the isomerase reaction, S2AL is rearranged via a Mg-dependent methyl migration to produce 3-hydroxy-3-methyl-2-ketobutyrate (HMKB). In the reductase reaction, this 2-ketoacid undergoes a metal-dependent reduction by NADPH to yield (R)-2,3-dihydroxy-isovalerate.</text>
</comment>
<comment type="catalytic activity">
    <reaction evidence="1">
        <text>(2R)-2,3-dihydroxy-3-methylbutanoate + NADP(+) = (2S)-2-acetolactate + NADPH + H(+)</text>
        <dbReference type="Rhea" id="RHEA:22068"/>
        <dbReference type="ChEBI" id="CHEBI:15378"/>
        <dbReference type="ChEBI" id="CHEBI:49072"/>
        <dbReference type="ChEBI" id="CHEBI:57783"/>
        <dbReference type="ChEBI" id="CHEBI:58349"/>
        <dbReference type="ChEBI" id="CHEBI:58476"/>
        <dbReference type="EC" id="1.1.1.86"/>
    </reaction>
</comment>
<comment type="catalytic activity">
    <reaction evidence="1">
        <text>(2R,3R)-2,3-dihydroxy-3-methylpentanoate + NADP(+) = (S)-2-ethyl-2-hydroxy-3-oxobutanoate + NADPH + H(+)</text>
        <dbReference type="Rhea" id="RHEA:13493"/>
        <dbReference type="ChEBI" id="CHEBI:15378"/>
        <dbReference type="ChEBI" id="CHEBI:49256"/>
        <dbReference type="ChEBI" id="CHEBI:49258"/>
        <dbReference type="ChEBI" id="CHEBI:57783"/>
        <dbReference type="ChEBI" id="CHEBI:58349"/>
        <dbReference type="EC" id="1.1.1.86"/>
    </reaction>
</comment>
<comment type="cofactor">
    <cofactor evidence="1">
        <name>Mg(2+)</name>
        <dbReference type="ChEBI" id="CHEBI:18420"/>
    </cofactor>
    <text evidence="1">Binds 2 magnesium ions per subunit.</text>
</comment>
<comment type="pathway">
    <text evidence="1">Amino-acid biosynthesis; L-isoleucine biosynthesis; L-isoleucine from 2-oxobutanoate: step 2/4.</text>
</comment>
<comment type="pathway">
    <text evidence="1">Amino-acid biosynthesis; L-valine biosynthesis; L-valine from pyruvate: step 2/4.</text>
</comment>
<comment type="similarity">
    <text evidence="1">Belongs to the ketol-acid reductoisomerase family.</text>
</comment>
<proteinExistence type="inferred from homology"/>
<accession>B1XUJ0</accession>
<evidence type="ECO:0000255" key="1">
    <source>
        <dbReference type="HAMAP-Rule" id="MF_00435"/>
    </source>
</evidence>
<evidence type="ECO:0000255" key="2">
    <source>
        <dbReference type="PROSITE-ProRule" id="PRU01197"/>
    </source>
</evidence>
<evidence type="ECO:0000255" key="3">
    <source>
        <dbReference type="PROSITE-ProRule" id="PRU01198"/>
    </source>
</evidence>